<name>SLAP2_BACAN</name>
<sequence length="862" mass="91362">MAKTNSYKKVIAGTMTAAMVAGIVSPVAAAGKSFPDVPAGHWAEGSINYLVDKGAITGKPDGTYGPTESIDRASAAVIFTKILNLPVDENAQPSFKDAKNIWSSKYIAAVEKAGVVKGDGKENFYPEGKIDRASFASMLVSAYNLKDKVNGELVTTFEDLLDHWGEEKANILINLGISVGTGGKWEPNKSVSRAEAAQFIALTDKKYGKKDNAQAYVTDVKVSEPTKLTLTGTGLDKLSADDVTLEGDKAVAIEASTDGTSAVVTLGGKVAPNKDLTVKVKNQSFVTKFVYEVKKLAVEKLTFDDDRAGQAIAFKLNDEKGNADVEYLNLANHDVKFVANNLDGSPANIFEGGEATSTTGKLAVGIKQGDYKVEVQVTKRGGLTVSNTGIITVKNLDTPASAIKNVVFALDADNDGVVNYGSKLSGKDFALNSQNLVVGEKASLNKLVATIAGEDKVVDPGSISIKSSNHGIISVVNNYITAEAAGEATLTIKVGDVTKDVKFKVTTDSRKLVSVKANPDKLQVVQNKTLPVTFVTTDQYGDPFGANTAAIKEVLPKTGVVAEGGLDVVTTDSGSIGTKTIGVTGNDVGEGTVHFQNGNGATLGSLYVNVTEGNVAFKNFELVSKVGQYGQSPDTKLDLNVSTTVEYQLSKYTSDRVYSDPENLEGYEVESKNLAVADAKIVGNKVVVTGKTPGKVDIHLTKNGATAGKATVEIVQETIAIKSVNFKPVQTENFVEKKINIGTVLELEKSNLDDIVKGINLTKETQHKVRVVKSGAEQGKLYLDRNGDAVFNAGDVKLGDVTVSQTSDSALPNFKADLYDTLTTKYTDKGTLVFKVLKDKDVITSEIGSQAVHVNVLNNPNL</sequence>
<gene>
    <name type="primary">eag</name>
    <name type="ordered locus">BA_0887</name>
    <name type="ordered locus">GBAA_0887</name>
    <name type="ordered locus">BAS0842</name>
</gene>
<comment type="function">
    <text>The S-layer is a paracrystalline mono-layered assembly of proteins which coat the surface of bacteria.</text>
</comment>
<comment type="subcellular location">
    <subcellularLocation>
        <location>Secreted</location>
        <location>Cell wall</location>
        <location>S-layer</location>
    </subcellularLocation>
</comment>
<dbReference type="EMBL" id="X99724">
    <property type="protein sequence ID" value="CAA68063.1"/>
    <property type="molecule type" value="Genomic_DNA"/>
</dbReference>
<dbReference type="EMBL" id="AE016879">
    <property type="protein sequence ID" value="AAP24884.1"/>
    <property type="molecule type" value="Genomic_DNA"/>
</dbReference>
<dbReference type="EMBL" id="AE017334">
    <property type="protein sequence ID" value="AAT29997.1"/>
    <property type="molecule type" value="Genomic_DNA"/>
</dbReference>
<dbReference type="EMBL" id="AE017225">
    <property type="protein sequence ID" value="AAT53169.1"/>
    <property type="molecule type" value="Genomic_DNA"/>
</dbReference>
<dbReference type="RefSeq" id="NP_843398.1">
    <property type="nucleotide sequence ID" value="NC_003997.3"/>
</dbReference>
<dbReference type="RefSeq" id="YP_027118.1">
    <property type="nucleotide sequence ID" value="NC_005945.1"/>
</dbReference>
<dbReference type="PDB" id="8OPR">
    <property type="method" value="X-ray"/>
    <property type="resolution" value="1.81 A"/>
    <property type="chains" value="A=215-862"/>
</dbReference>
<dbReference type="PDBsum" id="8OPR"/>
<dbReference type="SMR" id="P94217"/>
<dbReference type="IntAct" id="P94217">
    <property type="interactions" value="1"/>
</dbReference>
<dbReference type="STRING" id="261594.GBAA_0887"/>
<dbReference type="GeneID" id="45020950"/>
<dbReference type="KEGG" id="ban:BA_0887"/>
<dbReference type="KEGG" id="banh:HYU01_04765"/>
<dbReference type="KEGG" id="bar:GBAA_0887"/>
<dbReference type="KEGG" id="bat:BAS0842"/>
<dbReference type="PATRIC" id="fig|198094.11.peg.883"/>
<dbReference type="eggNOG" id="COG4196">
    <property type="taxonomic scope" value="Bacteria"/>
</dbReference>
<dbReference type="HOGENOM" id="CLU_330823_0_0_9"/>
<dbReference type="OMA" id="HWASKYI"/>
<dbReference type="OrthoDB" id="2931652at2"/>
<dbReference type="Proteomes" id="UP000000427">
    <property type="component" value="Chromosome"/>
</dbReference>
<dbReference type="Proteomes" id="UP000000594">
    <property type="component" value="Chromosome"/>
</dbReference>
<dbReference type="GO" id="GO:0005576">
    <property type="term" value="C:extracellular region"/>
    <property type="evidence" value="ECO:0007669"/>
    <property type="project" value="UniProtKB-KW"/>
</dbReference>
<dbReference type="GO" id="GO:0030115">
    <property type="term" value="C:S-layer"/>
    <property type="evidence" value="ECO:0000314"/>
    <property type="project" value="TIGR"/>
</dbReference>
<dbReference type="GO" id="GO:0005198">
    <property type="term" value="F:structural molecule activity"/>
    <property type="evidence" value="ECO:0000314"/>
    <property type="project" value="TIGR"/>
</dbReference>
<dbReference type="GO" id="GO:0141018">
    <property type="term" value="P:adhesion of symbiont to host via host extracellular matrix"/>
    <property type="evidence" value="ECO:0000269"/>
    <property type="project" value="SigSci"/>
</dbReference>
<dbReference type="GO" id="GO:0045229">
    <property type="term" value="P:external encapsulating structure organization"/>
    <property type="evidence" value="ECO:0000314"/>
    <property type="project" value="TIGR"/>
</dbReference>
<dbReference type="Gene3D" id="2.60.40.1080">
    <property type="match status" value="1"/>
</dbReference>
<dbReference type="InterPro" id="IPR051465">
    <property type="entry name" value="Cell_Envelope_Struct_Comp"/>
</dbReference>
<dbReference type="InterPro" id="IPR001119">
    <property type="entry name" value="SLH_dom"/>
</dbReference>
<dbReference type="PANTHER" id="PTHR43308:SF1">
    <property type="entry name" value="OUTER MEMBRANE PROTEIN ALPHA"/>
    <property type="match status" value="1"/>
</dbReference>
<dbReference type="PANTHER" id="PTHR43308">
    <property type="entry name" value="OUTER MEMBRANE PROTEIN ALPHA-RELATED"/>
    <property type="match status" value="1"/>
</dbReference>
<dbReference type="Pfam" id="PF00395">
    <property type="entry name" value="SLH"/>
    <property type="match status" value="2"/>
</dbReference>
<dbReference type="PROSITE" id="PS51272">
    <property type="entry name" value="SLH"/>
    <property type="match status" value="3"/>
</dbReference>
<organism>
    <name type="scientific">Bacillus anthracis</name>
    <dbReference type="NCBI Taxonomy" id="1392"/>
    <lineage>
        <taxon>Bacteria</taxon>
        <taxon>Bacillati</taxon>
        <taxon>Bacillota</taxon>
        <taxon>Bacilli</taxon>
        <taxon>Bacillales</taxon>
        <taxon>Bacillaceae</taxon>
        <taxon>Bacillus</taxon>
        <taxon>Bacillus cereus group</taxon>
    </lineage>
</organism>
<reference key="1">
    <citation type="journal article" date="1997" name="Mol. Microbiol.">
        <title>Molecular characterization of the Bacillus anthracis main S-layer component: evidence that it is the major cell-associated antigen.</title>
        <authorList>
            <person name="Mesnage S."/>
            <person name="Tosi-Couture E."/>
            <person name="Mock M."/>
            <person name="Gounon P."/>
            <person name="Fouet A."/>
        </authorList>
    </citation>
    <scope>NUCLEOTIDE SEQUENCE [GENOMIC DNA]</scope>
    <source>
        <strain>Sterne / 9131</strain>
    </source>
</reference>
<reference key="2">
    <citation type="journal article" date="2003" name="Nature">
        <title>The genome sequence of Bacillus anthracis Ames and comparison to closely related bacteria.</title>
        <authorList>
            <person name="Read T.D."/>
            <person name="Peterson S.N."/>
            <person name="Tourasse N.J."/>
            <person name="Baillie L.W."/>
            <person name="Paulsen I.T."/>
            <person name="Nelson K.E."/>
            <person name="Tettelin H."/>
            <person name="Fouts D.E."/>
            <person name="Eisen J.A."/>
            <person name="Gill S.R."/>
            <person name="Holtzapple E.K."/>
            <person name="Okstad O.A."/>
            <person name="Helgason E."/>
            <person name="Rilstone J."/>
            <person name="Wu M."/>
            <person name="Kolonay J.F."/>
            <person name="Beanan M.J."/>
            <person name="Dodson R.J."/>
            <person name="Brinkac L.M."/>
            <person name="Gwinn M.L."/>
            <person name="DeBoy R.T."/>
            <person name="Madpu R."/>
            <person name="Daugherty S.C."/>
            <person name="Durkin A.S."/>
            <person name="Haft D.H."/>
            <person name="Nelson W.C."/>
            <person name="Peterson J.D."/>
            <person name="Pop M."/>
            <person name="Khouri H.M."/>
            <person name="Radune D."/>
            <person name="Benton J.L."/>
            <person name="Mahamoud Y."/>
            <person name="Jiang L."/>
            <person name="Hance I.R."/>
            <person name="Weidman J.F."/>
            <person name="Berry K.J."/>
            <person name="Plaut R.D."/>
            <person name="Wolf A.M."/>
            <person name="Watkins K.L."/>
            <person name="Nierman W.C."/>
            <person name="Hazen A."/>
            <person name="Cline R.T."/>
            <person name="Redmond C."/>
            <person name="Thwaite J.E."/>
            <person name="White O."/>
            <person name="Salzberg S.L."/>
            <person name="Thomason B."/>
            <person name="Friedlander A.M."/>
            <person name="Koehler T.M."/>
            <person name="Hanna P.C."/>
            <person name="Kolstoe A.-B."/>
            <person name="Fraser C.M."/>
        </authorList>
    </citation>
    <scope>NUCLEOTIDE SEQUENCE [LARGE SCALE GENOMIC DNA]</scope>
    <source>
        <strain>Ames / isolate Porton</strain>
    </source>
</reference>
<reference key="3">
    <citation type="journal article" date="2009" name="J. Bacteriol.">
        <title>The complete genome sequence of Bacillus anthracis Ames 'Ancestor'.</title>
        <authorList>
            <person name="Ravel J."/>
            <person name="Jiang L."/>
            <person name="Stanley S.T."/>
            <person name="Wilson M.R."/>
            <person name="Decker R.S."/>
            <person name="Read T.D."/>
            <person name="Worsham P."/>
            <person name="Keim P.S."/>
            <person name="Salzberg S.L."/>
            <person name="Fraser-Liggett C.M."/>
            <person name="Rasko D.A."/>
        </authorList>
    </citation>
    <scope>NUCLEOTIDE SEQUENCE [LARGE SCALE GENOMIC DNA]</scope>
    <source>
        <strain>Ames ancestor</strain>
    </source>
</reference>
<reference key="4">
    <citation type="submission" date="2004-01" db="EMBL/GenBank/DDBJ databases">
        <title>Complete genome sequence of Bacillus anthracis Sterne.</title>
        <authorList>
            <person name="Brettin T.S."/>
            <person name="Bruce D."/>
            <person name="Challacombe J.F."/>
            <person name="Gilna P."/>
            <person name="Han C."/>
            <person name="Hill K."/>
            <person name="Hitchcock P."/>
            <person name="Jackson P."/>
            <person name="Keim P."/>
            <person name="Longmire J."/>
            <person name="Lucas S."/>
            <person name="Okinaka R."/>
            <person name="Richardson P."/>
            <person name="Rubin E."/>
            <person name="Tice H."/>
        </authorList>
    </citation>
    <scope>NUCLEOTIDE SEQUENCE [LARGE SCALE GENOMIC DNA]</scope>
    <source>
        <strain>Sterne</strain>
    </source>
</reference>
<evidence type="ECO:0000255" key="1"/>
<evidence type="ECO:0000255" key="2">
    <source>
        <dbReference type="PROSITE-ProRule" id="PRU00777"/>
    </source>
</evidence>
<evidence type="ECO:0007829" key="3">
    <source>
        <dbReference type="PDB" id="8OPR"/>
    </source>
</evidence>
<protein>
    <recommendedName>
        <fullName>S-layer protein EA1</fullName>
    </recommendedName>
</protein>
<accession>P94217</accession>
<accession>Q6I2R2</accession>
<accession>Q6KWJ3</accession>
<feature type="signal peptide" evidence="1">
    <location>
        <begin position="1"/>
        <end position="29"/>
    </location>
</feature>
<feature type="chain" id="PRO_0000032628" description="S-layer protein EA1">
    <location>
        <begin position="30"/>
        <end position="862"/>
    </location>
</feature>
<feature type="domain" description="SLH 1" evidence="2">
    <location>
        <begin position="30"/>
        <end position="93"/>
    </location>
</feature>
<feature type="domain" description="SLH 2" evidence="2">
    <location>
        <begin position="94"/>
        <end position="151"/>
    </location>
</feature>
<feature type="domain" description="SLH 3" evidence="2">
    <location>
        <begin position="152"/>
        <end position="214"/>
    </location>
</feature>
<feature type="strand" evidence="3">
    <location>
        <begin position="216"/>
        <end position="224"/>
    </location>
</feature>
<feature type="strand" evidence="3">
    <location>
        <begin position="227"/>
        <end position="234"/>
    </location>
</feature>
<feature type="helix" evidence="3">
    <location>
        <begin position="235"/>
        <end position="237"/>
    </location>
</feature>
<feature type="helix" evidence="3">
    <location>
        <begin position="240"/>
        <end position="242"/>
    </location>
</feature>
<feature type="strand" evidence="3">
    <location>
        <begin position="243"/>
        <end position="245"/>
    </location>
</feature>
<feature type="strand" evidence="3">
    <location>
        <begin position="251"/>
        <end position="255"/>
    </location>
</feature>
<feature type="strand" evidence="3">
    <location>
        <begin position="259"/>
        <end position="265"/>
    </location>
</feature>
<feature type="strand" evidence="3">
    <location>
        <begin position="274"/>
        <end position="280"/>
    </location>
</feature>
<feature type="strand" evidence="3">
    <location>
        <begin position="283"/>
        <end position="288"/>
    </location>
</feature>
<feature type="strand" evidence="3">
    <location>
        <begin position="296"/>
        <end position="298"/>
    </location>
</feature>
<feature type="strand" evidence="3">
    <location>
        <begin position="302"/>
        <end position="306"/>
    </location>
</feature>
<feature type="strand" evidence="3">
    <location>
        <begin position="314"/>
        <end position="316"/>
    </location>
</feature>
<feature type="helix" evidence="3">
    <location>
        <begin position="325"/>
        <end position="330"/>
    </location>
</feature>
<feature type="strand" evidence="3">
    <location>
        <begin position="333"/>
        <end position="341"/>
    </location>
</feature>
<feature type="strand" evidence="3">
    <location>
        <begin position="344"/>
        <end position="346"/>
    </location>
</feature>
<feature type="turn" evidence="3">
    <location>
        <begin position="351"/>
        <end position="353"/>
    </location>
</feature>
<feature type="strand" evidence="3">
    <location>
        <begin position="354"/>
        <end position="359"/>
    </location>
</feature>
<feature type="strand" evidence="3">
    <location>
        <begin position="368"/>
        <end position="379"/>
    </location>
</feature>
<feature type="strand" evidence="3">
    <location>
        <begin position="384"/>
        <end position="394"/>
    </location>
</feature>
<feature type="strand" evidence="3">
    <location>
        <begin position="400"/>
        <end position="410"/>
    </location>
</feature>
<feature type="strand" evidence="3">
    <location>
        <begin position="420"/>
        <end position="422"/>
    </location>
</feature>
<feature type="strand" evidence="3">
    <location>
        <begin position="432"/>
        <end position="437"/>
    </location>
</feature>
<feature type="strand" evidence="3">
    <location>
        <begin position="441"/>
        <end position="451"/>
    </location>
</feature>
<feature type="strand" evidence="3">
    <location>
        <begin position="454"/>
        <end position="457"/>
    </location>
</feature>
<feature type="helix" evidence="3">
    <location>
        <begin position="460"/>
        <end position="462"/>
    </location>
</feature>
<feature type="strand" evidence="3">
    <location>
        <begin position="463"/>
        <end position="468"/>
    </location>
</feature>
<feature type="turn" evidence="3">
    <location>
        <begin position="470"/>
        <end position="472"/>
    </location>
</feature>
<feature type="strand" evidence="3">
    <location>
        <begin position="473"/>
        <end position="476"/>
    </location>
</feature>
<feature type="strand" evidence="3">
    <location>
        <begin position="479"/>
        <end position="482"/>
    </location>
</feature>
<feature type="strand" evidence="3">
    <location>
        <begin position="484"/>
        <end position="494"/>
    </location>
</feature>
<feature type="strand" evidence="3">
    <location>
        <begin position="497"/>
        <end position="507"/>
    </location>
</feature>
<feature type="strand" evidence="3">
    <location>
        <begin position="512"/>
        <end position="526"/>
    </location>
</feature>
<feature type="strand" evidence="3">
    <location>
        <begin position="529"/>
        <end position="538"/>
    </location>
</feature>
<feature type="turn" evidence="3">
    <location>
        <begin position="548"/>
        <end position="550"/>
    </location>
</feature>
<feature type="strand" evidence="3">
    <location>
        <begin position="552"/>
        <end position="554"/>
    </location>
</feature>
<feature type="strand" evidence="3">
    <location>
        <begin position="578"/>
        <end position="585"/>
    </location>
</feature>
<feature type="strand" evidence="3">
    <location>
        <begin position="587"/>
        <end position="596"/>
    </location>
</feature>
<feature type="strand" evidence="3">
    <location>
        <begin position="602"/>
        <end position="611"/>
    </location>
</feature>
<feature type="strand" evidence="3">
    <location>
        <begin position="617"/>
        <end position="622"/>
    </location>
</feature>
<feature type="helix" evidence="3">
    <location>
        <begin position="623"/>
        <end position="625"/>
    </location>
</feature>
<feature type="strand" evidence="3">
    <location>
        <begin position="635"/>
        <end position="638"/>
    </location>
</feature>
<feature type="turn" evidence="3">
    <location>
        <begin position="639"/>
        <end position="641"/>
    </location>
</feature>
<feature type="strand" evidence="3">
    <location>
        <begin position="643"/>
        <end position="652"/>
    </location>
</feature>
<feature type="strand" evidence="3">
    <location>
        <begin position="658"/>
        <end position="661"/>
    </location>
</feature>
<feature type="strand" evidence="3">
    <location>
        <begin position="668"/>
        <end position="672"/>
    </location>
</feature>
<feature type="turn" evidence="3">
    <location>
        <begin position="674"/>
        <end position="676"/>
    </location>
</feature>
<feature type="strand" evidence="3">
    <location>
        <begin position="677"/>
        <end position="682"/>
    </location>
</feature>
<feature type="strand" evidence="3">
    <location>
        <begin position="685"/>
        <end position="690"/>
    </location>
</feature>
<feature type="strand" evidence="3">
    <location>
        <begin position="692"/>
        <end position="702"/>
    </location>
</feature>
<feature type="strand" evidence="3">
    <location>
        <begin position="705"/>
        <end position="715"/>
    </location>
</feature>
<feature type="strand" evidence="3">
    <location>
        <begin position="721"/>
        <end position="724"/>
    </location>
</feature>
<feature type="strand" evidence="3">
    <location>
        <begin position="738"/>
        <end position="740"/>
    </location>
</feature>
<feature type="helix" evidence="3">
    <location>
        <begin position="741"/>
        <end position="744"/>
    </location>
</feature>
<feature type="strand" evidence="3">
    <location>
        <begin position="751"/>
        <end position="763"/>
    </location>
</feature>
<feature type="strand" evidence="3">
    <location>
        <begin position="766"/>
        <end position="771"/>
    </location>
</feature>
<feature type="turn" evidence="3">
    <location>
        <begin position="776"/>
        <end position="779"/>
    </location>
</feature>
<feature type="strand" evidence="3">
    <location>
        <begin position="780"/>
        <end position="786"/>
    </location>
</feature>
<feature type="strand" evidence="3">
    <location>
        <begin position="788"/>
        <end position="791"/>
    </location>
</feature>
<feature type="strand" evidence="3">
    <location>
        <begin position="796"/>
        <end position="805"/>
    </location>
</feature>
<feature type="strand" evidence="3">
    <location>
        <begin position="820"/>
        <end position="823"/>
    </location>
</feature>
<feature type="strand" evidence="3">
    <location>
        <begin position="829"/>
        <end position="838"/>
    </location>
</feature>
<feature type="helix" evidence="3">
    <location>
        <begin position="843"/>
        <end position="845"/>
    </location>
</feature>
<feature type="strand" evidence="3">
    <location>
        <begin position="846"/>
        <end position="855"/>
    </location>
</feature>
<keyword id="KW-0002">3D-structure</keyword>
<keyword id="KW-0134">Cell wall</keyword>
<keyword id="KW-1185">Reference proteome</keyword>
<keyword id="KW-0677">Repeat</keyword>
<keyword id="KW-0701">S-layer</keyword>
<keyword id="KW-0964">Secreted</keyword>
<keyword id="KW-0732">Signal</keyword>
<proteinExistence type="evidence at protein level"/>